<organism>
    <name type="scientific">Arabidopsis thaliana</name>
    <name type="common">Mouse-ear cress</name>
    <dbReference type="NCBI Taxonomy" id="3702"/>
    <lineage>
        <taxon>Eukaryota</taxon>
        <taxon>Viridiplantae</taxon>
        <taxon>Streptophyta</taxon>
        <taxon>Embryophyta</taxon>
        <taxon>Tracheophyta</taxon>
        <taxon>Spermatophyta</taxon>
        <taxon>Magnoliopsida</taxon>
        <taxon>eudicotyledons</taxon>
        <taxon>Gunneridae</taxon>
        <taxon>Pentapetalae</taxon>
        <taxon>rosids</taxon>
        <taxon>malvids</taxon>
        <taxon>Brassicales</taxon>
        <taxon>Brassicaceae</taxon>
        <taxon>Camelineae</taxon>
        <taxon>Arabidopsis</taxon>
    </lineage>
</organism>
<gene>
    <name evidence="6" type="primary">RUP1</name>
    <name evidence="7" type="synonym">EFO1</name>
    <name evidence="10" type="ordered locus">At5g52250</name>
    <name evidence="11" type="ORF">F17P19.15</name>
</gene>
<name>RUP1_ARATH</name>
<keyword id="KW-0963">Cytoplasm</keyword>
<keyword id="KW-0287">Flowering</keyword>
<keyword id="KW-0539">Nucleus</keyword>
<keyword id="KW-1185">Reference proteome</keyword>
<keyword id="KW-0677">Repeat</keyword>
<keyword id="KW-0853">WD repeat</keyword>
<accession>Q9LTJ6</accession>
<accession>Q8LBH5</accession>
<evidence type="ECO:0000255" key="1"/>
<evidence type="ECO:0000269" key="2">
    <source>
    </source>
</evidence>
<evidence type="ECO:0000269" key="3">
    <source>
    </source>
</evidence>
<evidence type="ECO:0000269" key="4">
    <source>
    </source>
</evidence>
<evidence type="ECO:0000269" key="5">
    <source>
    </source>
</evidence>
<evidence type="ECO:0000303" key="6">
    <source>
    </source>
</evidence>
<evidence type="ECO:0000303" key="7">
    <source>
    </source>
</evidence>
<evidence type="ECO:0000305" key="8"/>
<evidence type="ECO:0000305" key="9">
    <source>
    </source>
</evidence>
<evidence type="ECO:0000312" key="10">
    <source>
        <dbReference type="Araport" id="AT5G52250"/>
    </source>
</evidence>
<evidence type="ECO:0000312" key="11">
    <source>
        <dbReference type="EMBL" id="BAA97468.1"/>
    </source>
</evidence>
<protein>
    <recommendedName>
        <fullName evidence="6">WD repeat-containing protein RUP1</fullName>
    </recommendedName>
    <alternativeName>
        <fullName evidence="7">Protein EARLY FLOWERING BY OVEREXPRESSION 1</fullName>
    </alternativeName>
    <alternativeName>
        <fullName evidence="6">Protein REPRESSOR OF UV-B PHOTOMORPHOGENESIS 1</fullName>
    </alternativeName>
</protein>
<feature type="chain" id="PRO_0000421720" description="WD repeat-containing protein RUP1">
    <location>
        <begin position="1"/>
        <end position="385"/>
    </location>
</feature>
<feature type="repeat" description="WD 1" evidence="1">
    <location>
        <begin position="69"/>
        <end position="108"/>
    </location>
</feature>
<feature type="repeat" description="WD 2" evidence="1">
    <location>
        <begin position="119"/>
        <end position="160"/>
    </location>
</feature>
<feature type="repeat" description="WD 3" evidence="1">
    <location>
        <begin position="163"/>
        <end position="205"/>
    </location>
</feature>
<feature type="repeat" description="WD 4" evidence="1">
    <location>
        <begin position="210"/>
        <end position="250"/>
    </location>
</feature>
<feature type="repeat" description="WD 5" evidence="1">
    <location>
        <begin position="254"/>
        <end position="292"/>
    </location>
</feature>
<feature type="repeat" description="WD 6" evidence="1">
    <location>
        <begin position="298"/>
        <end position="337"/>
    </location>
</feature>
<feature type="repeat" description="WD 7" evidence="1">
    <location>
        <begin position="348"/>
        <end position="385"/>
    </location>
</feature>
<feature type="sequence conflict" description="In Ref. 5; AAM64761." evidence="8" ref="5">
    <original>Y</original>
    <variation>C</variation>
    <location>
        <position position="117"/>
    </location>
</feature>
<feature type="sequence conflict" description="In Ref. 5; AAM64761." evidence="8" ref="5">
    <original>I</original>
    <variation>L</variation>
    <location>
        <position position="182"/>
    </location>
</feature>
<feature type="sequence conflict" description="In Ref. 5; AAM64761." evidence="8" ref="5">
    <original>R</original>
    <variation>Q</variation>
    <location>
        <position position="235"/>
    </location>
</feature>
<reference key="1">
    <citation type="submission" date="1999-04" db="EMBL/GenBank/DDBJ databases">
        <title>Structural analysis of Arabidopsis thaliana chromosome 5. XI.</title>
        <authorList>
            <person name="Kaneko T."/>
            <person name="Katoh T."/>
            <person name="Asamizu E."/>
            <person name="Sato S."/>
            <person name="Nakamura Y."/>
            <person name="Kotani H."/>
            <person name="Tabata S."/>
        </authorList>
    </citation>
    <scope>NUCLEOTIDE SEQUENCE [LARGE SCALE GENOMIC DNA]</scope>
    <source>
        <strain>cv. Columbia</strain>
    </source>
</reference>
<reference key="2">
    <citation type="journal article" date="2017" name="Plant J.">
        <title>Araport11: a complete reannotation of the Arabidopsis thaliana reference genome.</title>
        <authorList>
            <person name="Cheng C.Y."/>
            <person name="Krishnakumar V."/>
            <person name="Chan A.P."/>
            <person name="Thibaud-Nissen F."/>
            <person name="Schobel S."/>
            <person name="Town C.D."/>
        </authorList>
    </citation>
    <scope>GENOME REANNOTATION</scope>
    <source>
        <strain>cv. Columbia</strain>
    </source>
</reference>
<reference key="3">
    <citation type="journal article" date="2003" name="Science">
        <title>Empirical analysis of transcriptional activity in the Arabidopsis genome.</title>
        <authorList>
            <person name="Yamada K."/>
            <person name="Lim J."/>
            <person name="Dale J.M."/>
            <person name="Chen H."/>
            <person name="Shinn P."/>
            <person name="Palm C.J."/>
            <person name="Southwick A.M."/>
            <person name="Wu H.C."/>
            <person name="Kim C.J."/>
            <person name="Nguyen M."/>
            <person name="Pham P.K."/>
            <person name="Cheuk R.F."/>
            <person name="Karlin-Newmann G."/>
            <person name="Liu S.X."/>
            <person name="Lam B."/>
            <person name="Sakano H."/>
            <person name="Wu T."/>
            <person name="Yu G."/>
            <person name="Miranda M."/>
            <person name="Quach H.L."/>
            <person name="Tripp M."/>
            <person name="Chang C.H."/>
            <person name="Lee J.M."/>
            <person name="Toriumi M.J."/>
            <person name="Chan M.M."/>
            <person name="Tang C.C."/>
            <person name="Onodera C.S."/>
            <person name="Deng J.M."/>
            <person name="Akiyama K."/>
            <person name="Ansari Y."/>
            <person name="Arakawa T."/>
            <person name="Banh J."/>
            <person name="Banno F."/>
            <person name="Bowser L."/>
            <person name="Brooks S.Y."/>
            <person name="Carninci P."/>
            <person name="Chao Q."/>
            <person name="Choy N."/>
            <person name="Enju A."/>
            <person name="Goldsmith A.D."/>
            <person name="Gurjal M."/>
            <person name="Hansen N.F."/>
            <person name="Hayashizaki Y."/>
            <person name="Johnson-Hopson C."/>
            <person name="Hsuan V.W."/>
            <person name="Iida K."/>
            <person name="Karnes M."/>
            <person name="Khan S."/>
            <person name="Koesema E."/>
            <person name="Ishida J."/>
            <person name="Jiang P.X."/>
            <person name="Jones T."/>
            <person name="Kawai J."/>
            <person name="Kamiya A."/>
            <person name="Meyers C."/>
            <person name="Nakajima M."/>
            <person name="Narusaka M."/>
            <person name="Seki M."/>
            <person name="Sakurai T."/>
            <person name="Satou M."/>
            <person name="Tamse R."/>
            <person name="Vaysberg M."/>
            <person name="Wallender E.K."/>
            <person name="Wong C."/>
            <person name="Yamamura Y."/>
            <person name="Yuan S."/>
            <person name="Shinozaki K."/>
            <person name="Davis R.W."/>
            <person name="Theologis A."/>
            <person name="Ecker J.R."/>
        </authorList>
    </citation>
    <scope>NUCLEOTIDE SEQUENCE [LARGE SCALE MRNA]</scope>
    <source>
        <strain>cv. Columbia</strain>
    </source>
</reference>
<reference key="4">
    <citation type="submission" date="2006-07" db="EMBL/GenBank/DDBJ databases">
        <title>Large-scale analysis of RIKEN Arabidopsis full-length (RAFL) cDNAs.</title>
        <authorList>
            <person name="Totoki Y."/>
            <person name="Seki M."/>
            <person name="Ishida J."/>
            <person name="Nakajima M."/>
            <person name="Enju A."/>
            <person name="Kamiya A."/>
            <person name="Narusaka M."/>
            <person name="Shin-i T."/>
            <person name="Nakagawa M."/>
            <person name="Sakamoto N."/>
            <person name="Oishi K."/>
            <person name="Kohara Y."/>
            <person name="Kobayashi M."/>
            <person name="Toyoda A."/>
            <person name="Sakaki Y."/>
            <person name="Sakurai T."/>
            <person name="Iida K."/>
            <person name="Akiyama K."/>
            <person name="Satou M."/>
            <person name="Toyoda T."/>
            <person name="Konagaya A."/>
            <person name="Carninci P."/>
            <person name="Kawai J."/>
            <person name="Hayashizaki Y."/>
            <person name="Shinozaki K."/>
        </authorList>
    </citation>
    <scope>NUCLEOTIDE SEQUENCE [LARGE SCALE MRNA]</scope>
    <source>
        <strain>cv. Columbia</strain>
    </source>
</reference>
<reference key="5">
    <citation type="submission" date="2002-03" db="EMBL/GenBank/DDBJ databases">
        <title>Full-length cDNA from Arabidopsis thaliana.</title>
        <authorList>
            <person name="Brover V.V."/>
            <person name="Troukhan M.E."/>
            <person name="Alexandrov N.A."/>
            <person name="Lu Y.-P."/>
            <person name="Flavell R.B."/>
            <person name="Feldmann K.A."/>
        </authorList>
    </citation>
    <scope>NUCLEOTIDE SEQUENCE [LARGE SCALE MRNA]</scope>
</reference>
<reference key="6">
    <citation type="journal article" date="2010" name="Proc. Natl. Acad. Sci. U.S.A.">
        <title>Negative feedback regulation of UV-B-induced photomorphogenesis and stress acclimation in Arabidopsis.</title>
        <authorList>
            <person name="Gruber H."/>
            <person name="Heijde M."/>
            <person name="Heller W."/>
            <person name="Albert A."/>
            <person name="Seidlitz H.K."/>
            <person name="Ulm R."/>
        </authorList>
    </citation>
    <scope>FUNCTION</scope>
    <scope>INTERACTION WITH UVR8</scope>
    <scope>SUBCELLULAR LOCATION</scope>
    <scope>INDUCTION BY UV-B</scope>
    <source>
        <strain>cv. Columbia</strain>
    </source>
</reference>
<reference key="7">
    <citation type="journal article" date="2011" name="J. Exp. Bot.">
        <title>EFO1 and EFO2, encoding putative WD-domain proteins, have overlapping and distinct roles in the regulation of vegetative development and flowering of Arabidopsis.</title>
        <authorList>
            <person name="Wang W."/>
            <person name="Yang D."/>
            <person name="Feldmann K.A."/>
        </authorList>
    </citation>
    <scope>FUNCTION</scope>
    <scope>INDUCTION</scope>
    <scope>DISRUPTION PHENOTYPE</scope>
    <source>
        <strain>cv. Wassilewskija</strain>
    </source>
</reference>
<reference key="8">
    <citation type="journal article" date="2012" name="Proc. Natl. Acad. Sci. U.S.A.">
        <title>C-terminal region of the UV-B photoreceptor UVR8 initiates signaling through interaction with the COP1 protein.</title>
        <authorList>
            <person name="Cloix C."/>
            <person name="Kaiserli E."/>
            <person name="Heilmann M."/>
            <person name="Baxter K.J."/>
            <person name="Brown B.A."/>
            <person name="O'Hara A."/>
            <person name="Smith B.O."/>
            <person name="Christie J.M."/>
            <person name="Jenkins G.I."/>
        </authorList>
    </citation>
    <scope>INTERACTION WITH UVR8</scope>
</reference>
<reference key="9">
    <citation type="journal article" date="2017" name="Biochem. Biophys. Res. Commun.">
        <title>DHU1 negatively regulates UV-B signaling via its direct interaction with COP1 and RUP1.</title>
        <authorList>
            <person name="Kim S.-H."/>
            <person name="Kim H."/>
            <person name="Chung S."/>
            <person name="Lee J.-H."/>
        </authorList>
    </citation>
    <scope>FUNCTION</scope>
    <scope>DISRUPTION PHENOTYPE</scope>
    <scope>INTERACTION WITH DHU1</scope>
    <source>
        <strain>cv. Columbia</strain>
    </source>
</reference>
<proteinExistence type="evidence at protein level"/>
<dbReference type="EMBL" id="AB025603">
    <property type="protein sequence ID" value="BAA97468.1"/>
    <property type="molecule type" value="Genomic_DNA"/>
</dbReference>
<dbReference type="EMBL" id="CP002688">
    <property type="protein sequence ID" value="AED96192.1"/>
    <property type="molecule type" value="Genomic_DNA"/>
</dbReference>
<dbReference type="EMBL" id="BT003150">
    <property type="protein sequence ID" value="AAO24582.1"/>
    <property type="molecule type" value="mRNA"/>
</dbReference>
<dbReference type="EMBL" id="AK228112">
    <property type="protein sequence ID" value="BAF00070.1"/>
    <property type="molecule type" value="mRNA"/>
</dbReference>
<dbReference type="EMBL" id="AY087205">
    <property type="protein sequence ID" value="AAM64761.1"/>
    <property type="molecule type" value="mRNA"/>
</dbReference>
<dbReference type="RefSeq" id="NP_200038.1">
    <property type="nucleotide sequence ID" value="NM_124604.5"/>
</dbReference>
<dbReference type="SMR" id="Q9LTJ6"/>
<dbReference type="BioGRID" id="20546">
    <property type="interactions" value="1"/>
</dbReference>
<dbReference type="DIP" id="DIP-60744N"/>
<dbReference type="FunCoup" id="Q9LTJ6">
    <property type="interactions" value="1"/>
</dbReference>
<dbReference type="IntAct" id="Q9LTJ6">
    <property type="interactions" value="1"/>
</dbReference>
<dbReference type="STRING" id="3702.Q9LTJ6"/>
<dbReference type="iPTMnet" id="Q9LTJ6"/>
<dbReference type="PaxDb" id="3702-AT5G52250.1"/>
<dbReference type="ProteomicsDB" id="228059"/>
<dbReference type="EnsemblPlants" id="AT5G52250.1">
    <property type="protein sequence ID" value="AT5G52250.1"/>
    <property type="gene ID" value="AT5G52250"/>
</dbReference>
<dbReference type="GeneID" id="835301"/>
<dbReference type="Gramene" id="AT5G52250.1">
    <property type="protein sequence ID" value="AT5G52250.1"/>
    <property type="gene ID" value="AT5G52250"/>
</dbReference>
<dbReference type="KEGG" id="ath:AT5G52250"/>
<dbReference type="Araport" id="AT5G52250"/>
<dbReference type="TAIR" id="AT5G52250">
    <property type="gene designation" value="RUP1"/>
</dbReference>
<dbReference type="eggNOG" id="ENOG502QVDX">
    <property type="taxonomic scope" value="Eukaryota"/>
</dbReference>
<dbReference type="HOGENOM" id="CLU_006994_0_2_1"/>
<dbReference type="InParanoid" id="Q9LTJ6"/>
<dbReference type="OMA" id="QVDEDWC"/>
<dbReference type="PhylomeDB" id="Q9LTJ6"/>
<dbReference type="PRO" id="PR:Q9LTJ6"/>
<dbReference type="Proteomes" id="UP000006548">
    <property type="component" value="Chromosome 5"/>
</dbReference>
<dbReference type="ExpressionAtlas" id="Q9LTJ6">
    <property type="expression patterns" value="baseline and differential"/>
</dbReference>
<dbReference type="GO" id="GO:0080008">
    <property type="term" value="C:Cul4-RING E3 ubiquitin ligase complex"/>
    <property type="evidence" value="ECO:0000250"/>
    <property type="project" value="TAIR"/>
</dbReference>
<dbReference type="GO" id="GO:0005829">
    <property type="term" value="C:cytosol"/>
    <property type="evidence" value="ECO:0007669"/>
    <property type="project" value="UniProtKB-SubCell"/>
</dbReference>
<dbReference type="GO" id="GO:0005634">
    <property type="term" value="C:nucleus"/>
    <property type="evidence" value="ECO:0007669"/>
    <property type="project" value="UniProtKB-SubCell"/>
</dbReference>
<dbReference type="GO" id="GO:0009908">
    <property type="term" value="P:flower development"/>
    <property type="evidence" value="ECO:0007669"/>
    <property type="project" value="UniProtKB-KW"/>
</dbReference>
<dbReference type="GO" id="GO:0043254">
    <property type="term" value="P:regulation of protein-containing complex assembly"/>
    <property type="evidence" value="ECO:0000314"/>
    <property type="project" value="TAIR"/>
</dbReference>
<dbReference type="GO" id="GO:0010218">
    <property type="term" value="P:response to far red light"/>
    <property type="evidence" value="ECO:0000270"/>
    <property type="project" value="TAIR"/>
</dbReference>
<dbReference type="GO" id="GO:0010114">
    <property type="term" value="P:response to red light"/>
    <property type="evidence" value="ECO:0000270"/>
    <property type="project" value="TAIR"/>
</dbReference>
<dbReference type="GO" id="GO:0010224">
    <property type="term" value="P:response to UV-B"/>
    <property type="evidence" value="ECO:0000316"/>
    <property type="project" value="UniProtKB"/>
</dbReference>
<dbReference type="FunFam" id="2.130.10.10:FF:000853">
    <property type="entry name" value="WD repeat-containing protein RUP2"/>
    <property type="match status" value="1"/>
</dbReference>
<dbReference type="Gene3D" id="2.130.10.10">
    <property type="entry name" value="YVTN repeat-like/Quinoprotein amine dehydrogenase"/>
    <property type="match status" value="1"/>
</dbReference>
<dbReference type="InterPro" id="IPR044616">
    <property type="entry name" value="RUP1/2"/>
</dbReference>
<dbReference type="InterPro" id="IPR015943">
    <property type="entry name" value="WD40/YVTN_repeat-like_dom_sf"/>
</dbReference>
<dbReference type="InterPro" id="IPR036322">
    <property type="entry name" value="WD40_repeat_dom_sf"/>
</dbReference>
<dbReference type="InterPro" id="IPR001680">
    <property type="entry name" value="WD40_rpt"/>
</dbReference>
<dbReference type="PANTHER" id="PTHR45389">
    <property type="entry name" value="WD REPEAT-CONTAINING PROTEIN RUP1"/>
    <property type="match status" value="1"/>
</dbReference>
<dbReference type="PANTHER" id="PTHR45389:SF1">
    <property type="entry name" value="WD REPEAT-CONTAINING PROTEIN RUP1"/>
    <property type="match status" value="1"/>
</dbReference>
<dbReference type="Pfam" id="PF00400">
    <property type="entry name" value="WD40"/>
    <property type="match status" value="3"/>
</dbReference>
<dbReference type="SMART" id="SM00320">
    <property type="entry name" value="WD40"/>
    <property type="match status" value="6"/>
</dbReference>
<dbReference type="SUPFAM" id="SSF50978">
    <property type="entry name" value="WD40 repeat-like"/>
    <property type="match status" value="1"/>
</dbReference>
<dbReference type="PROSITE" id="PS50082">
    <property type="entry name" value="WD_REPEATS_2"/>
    <property type="match status" value="2"/>
</dbReference>
<dbReference type="PROSITE" id="PS50294">
    <property type="entry name" value="WD_REPEATS_REGION"/>
    <property type="match status" value="1"/>
</dbReference>
<sequence>MEALFCSEIPNNNIRSSINDLSSSSSYTWPMIMTSSSSSSSSPTIMNIENIPRCDWDLSLSAVVSSASTGSDAIGAIEFDPTGEIIATGGIARKIRSYRLSSLLESRDDHVTASESYICTPAKLSSLKWRPDFSGRVIGSGDYDGVVTEYDVEKQVPVSERDEHGGRRIWSVDYTLYNGSLIGASGSDDGTVQMWDPRNGGTLEETVRPGGGAAICSVEFDPFGGSSIAVGCADRNAYVYDIRRLVDPLIVLDGHTKTVTYARFMDSHTIVTGSTDGSLKQWDIDNGRRVVRTYRGHVNSRNFVGLSVWRHGGLVVSGSENNQVFVYDKRWEEPVWVCGLGHTNRFGSDRRFVSSVCLRQVDEDWCTLVAGGSDGALEIFSGKQS</sequence>
<comment type="function">
    <text evidence="2 3 5">Functions in association with RUP2 as repressor of UV-B-induced photomorphogenesis mediated by UVR8 and HY5, likely in coordination with DHU1 (PubMed:28735869). Plays a crucial negative feedback regulatory role downstream of UVR8-COP1 to inhibit UVR8 function, balance UV-B-specific responses and ensure normal plant growth. Is involved in the regulation of photoperiodic flowering and vegetative development.</text>
</comment>
<comment type="subunit">
    <text evidence="2 4 5">Interacts with UVR8 (PubMed:21041653, PubMed:22988111). Interacts directly with DHU1 (PubMed:28735869).</text>
</comment>
<comment type="subcellular location">
    <subcellularLocation>
        <location evidence="2">Nucleus</location>
    </subcellularLocation>
    <subcellularLocation>
        <location evidence="2">Cytoplasm</location>
        <location evidence="2">Cytosol</location>
    </subcellularLocation>
</comment>
<comment type="induction">
    <text evidence="2 3">Circadian-regulation. Expression increases during the dark phase with a peak at the beginning of the light phase and then decreases to reach the lowest expression at the end of the light phase. Induced by UV-B.</text>
</comment>
<comment type="disruption phenotype">
    <text evidence="3 5">No visible phenotype under normal growth conditions (PubMed:21242318). The UV-B responsiveness of the double mutant dhu1-1 rup1-1 is similar to that of the single mutants dhu1-1 and rup1-1 (PubMed:28735869).</text>
</comment>
<comment type="miscellaneous">
    <text evidence="9">Overexpression of RUP1 confers an early flowering phenotype.</text>
</comment>